<organism>
    <name type="scientific">Staphylococcus aureus (strain Mu3 / ATCC 700698)</name>
    <dbReference type="NCBI Taxonomy" id="418127"/>
    <lineage>
        <taxon>Bacteria</taxon>
        <taxon>Bacillati</taxon>
        <taxon>Bacillota</taxon>
        <taxon>Bacilli</taxon>
        <taxon>Bacillales</taxon>
        <taxon>Staphylococcaceae</taxon>
        <taxon>Staphylococcus</taxon>
    </lineage>
</organism>
<comment type="function">
    <text evidence="1">Together with the chaperonin GroEL, plays an essential role in assisting protein folding. The GroEL-GroES system forms a nano-cage that allows encapsulation of the non-native substrate proteins and provides a physical environment optimized to promote and accelerate protein folding. GroES binds to the apical surface of the GroEL ring, thereby capping the opening of the GroEL channel.</text>
</comment>
<comment type="subunit">
    <text evidence="1">Heptamer of 7 subunits arranged in a ring. Interacts with the chaperonin GroEL.</text>
</comment>
<comment type="subcellular location">
    <subcellularLocation>
        <location evidence="1">Cytoplasm</location>
    </subcellularLocation>
</comment>
<comment type="similarity">
    <text evidence="1">Belongs to the GroES chaperonin family.</text>
</comment>
<keyword id="KW-0143">Chaperone</keyword>
<keyword id="KW-0963">Cytoplasm</keyword>
<dbReference type="EMBL" id="AP009324">
    <property type="protein sequence ID" value="BAF78898.1"/>
    <property type="molecule type" value="Genomic_DNA"/>
</dbReference>
<dbReference type="RefSeq" id="WP_000917289.1">
    <property type="nucleotide sequence ID" value="NZ_CTYB01000079.1"/>
</dbReference>
<dbReference type="SMR" id="A7X4J3"/>
<dbReference type="GeneID" id="98346332"/>
<dbReference type="KEGG" id="saw:SAHV_2015"/>
<dbReference type="HOGENOM" id="CLU_132825_2_1_9"/>
<dbReference type="GO" id="GO:0005737">
    <property type="term" value="C:cytoplasm"/>
    <property type="evidence" value="ECO:0007669"/>
    <property type="project" value="UniProtKB-SubCell"/>
</dbReference>
<dbReference type="GO" id="GO:0005524">
    <property type="term" value="F:ATP binding"/>
    <property type="evidence" value="ECO:0007669"/>
    <property type="project" value="InterPro"/>
</dbReference>
<dbReference type="GO" id="GO:0046872">
    <property type="term" value="F:metal ion binding"/>
    <property type="evidence" value="ECO:0007669"/>
    <property type="project" value="TreeGrafter"/>
</dbReference>
<dbReference type="GO" id="GO:0044183">
    <property type="term" value="F:protein folding chaperone"/>
    <property type="evidence" value="ECO:0007669"/>
    <property type="project" value="InterPro"/>
</dbReference>
<dbReference type="GO" id="GO:0051087">
    <property type="term" value="F:protein-folding chaperone binding"/>
    <property type="evidence" value="ECO:0007669"/>
    <property type="project" value="TreeGrafter"/>
</dbReference>
<dbReference type="GO" id="GO:0051082">
    <property type="term" value="F:unfolded protein binding"/>
    <property type="evidence" value="ECO:0007669"/>
    <property type="project" value="TreeGrafter"/>
</dbReference>
<dbReference type="GO" id="GO:0051085">
    <property type="term" value="P:chaperone cofactor-dependent protein refolding"/>
    <property type="evidence" value="ECO:0007669"/>
    <property type="project" value="TreeGrafter"/>
</dbReference>
<dbReference type="CDD" id="cd00320">
    <property type="entry name" value="cpn10"/>
    <property type="match status" value="1"/>
</dbReference>
<dbReference type="FunFam" id="2.30.33.40:FF:000001">
    <property type="entry name" value="10 kDa chaperonin"/>
    <property type="match status" value="1"/>
</dbReference>
<dbReference type="Gene3D" id="2.30.33.40">
    <property type="entry name" value="GroES chaperonin"/>
    <property type="match status" value="1"/>
</dbReference>
<dbReference type="HAMAP" id="MF_00580">
    <property type="entry name" value="CH10"/>
    <property type="match status" value="1"/>
</dbReference>
<dbReference type="InterPro" id="IPR020818">
    <property type="entry name" value="Chaperonin_GroES"/>
</dbReference>
<dbReference type="InterPro" id="IPR037124">
    <property type="entry name" value="Chaperonin_GroES_sf"/>
</dbReference>
<dbReference type="InterPro" id="IPR018369">
    <property type="entry name" value="Chaprnonin_Cpn10_CS"/>
</dbReference>
<dbReference type="InterPro" id="IPR011032">
    <property type="entry name" value="GroES-like_sf"/>
</dbReference>
<dbReference type="NCBIfam" id="NF001531">
    <property type="entry name" value="PRK00364.2-2"/>
    <property type="match status" value="1"/>
</dbReference>
<dbReference type="NCBIfam" id="NF001532">
    <property type="entry name" value="PRK00364.2-3"/>
    <property type="match status" value="1"/>
</dbReference>
<dbReference type="NCBIfam" id="NF001533">
    <property type="entry name" value="PRK00364.2-4"/>
    <property type="match status" value="1"/>
</dbReference>
<dbReference type="NCBIfam" id="NF001534">
    <property type="entry name" value="PRK00364.2-5"/>
    <property type="match status" value="1"/>
</dbReference>
<dbReference type="PANTHER" id="PTHR10772">
    <property type="entry name" value="10 KDA HEAT SHOCK PROTEIN"/>
    <property type="match status" value="1"/>
</dbReference>
<dbReference type="PANTHER" id="PTHR10772:SF58">
    <property type="entry name" value="CO-CHAPERONIN GROES"/>
    <property type="match status" value="1"/>
</dbReference>
<dbReference type="Pfam" id="PF00166">
    <property type="entry name" value="Cpn10"/>
    <property type="match status" value="1"/>
</dbReference>
<dbReference type="PRINTS" id="PR00297">
    <property type="entry name" value="CHAPERONIN10"/>
</dbReference>
<dbReference type="SMART" id="SM00883">
    <property type="entry name" value="Cpn10"/>
    <property type="match status" value="1"/>
</dbReference>
<dbReference type="SUPFAM" id="SSF50129">
    <property type="entry name" value="GroES-like"/>
    <property type="match status" value="1"/>
</dbReference>
<dbReference type="PROSITE" id="PS00681">
    <property type="entry name" value="CHAPERONINS_CPN10"/>
    <property type="match status" value="1"/>
</dbReference>
<sequence length="94" mass="10416">MLKPIGNRVIIEKKEQEQTTKSGIVLTDSAKEKSNEGVIVAVGTGRLLNDGTRVTPEVKEGDRVVFQQYAGTEVKRDNETYLVLNEEDILAVIE</sequence>
<feature type="chain" id="PRO_1000025375" description="Co-chaperonin GroES">
    <location>
        <begin position="1"/>
        <end position="94"/>
    </location>
</feature>
<reference key="1">
    <citation type="journal article" date="2008" name="Antimicrob. Agents Chemother.">
        <title>Mutated response regulator graR is responsible for phenotypic conversion of Staphylococcus aureus from heterogeneous vancomycin-intermediate resistance to vancomycin-intermediate resistance.</title>
        <authorList>
            <person name="Neoh H.-M."/>
            <person name="Cui L."/>
            <person name="Yuzawa H."/>
            <person name="Takeuchi F."/>
            <person name="Matsuo M."/>
            <person name="Hiramatsu K."/>
        </authorList>
    </citation>
    <scope>NUCLEOTIDE SEQUENCE [LARGE SCALE GENOMIC DNA]</scope>
    <source>
        <strain>Mu3 / ATCC 700698</strain>
    </source>
</reference>
<evidence type="ECO:0000255" key="1">
    <source>
        <dbReference type="HAMAP-Rule" id="MF_00580"/>
    </source>
</evidence>
<protein>
    <recommendedName>
        <fullName evidence="1">Co-chaperonin GroES</fullName>
    </recommendedName>
    <alternativeName>
        <fullName evidence="1">10 kDa chaperonin</fullName>
    </alternativeName>
    <alternativeName>
        <fullName evidence="1">Chaperonin-10</fullName>
        <shortName evidence="1">Cpn10</shortName>
    </alternativeName>
</protein>
<accession>A7X4J3</accession>
<proteinExistence type="inferred from homology"/>
<name>CH10_STAA1</name>
<gene>
    <name evidence="1" type="primary">groES</name>
    <name evidence="1" type="synonym">groS</name>
    <name type="ordered locus">SAHV_2015</name>
</gene>